<sequence>MKNTKTSQEQVIELKLSDRQKKVLKSIVDEYTISATPVSSKLLVQKEFKDQSSATIRNEMMFLEKNGLIEKQHISGGRVPSLKGYDFYNKNLINKNNNVSDNFKMRLHKILSKRYSNIDEILNAAVSIINETTQLPAVVTKTSSDELLKRIDLVKINDNSALVLIVTSSENILTHSIKLDKNTKFNDLQTCFSVLDERLVDTKLSLISSKLDLIVDIVRNKLEEVEYYFSKIVHRVFDFYAYKPNIDSKTYGVKYLTKHSEFEDQQKLNDLLNLLEDSTIWQQIALNKKTDGLAKIMLGNEIGHEHLAIATTQINLANTNHQITVVGPTRMDYAKIKALLDFLKIEIEKILGSTNEH</sequence>
<comment type="function">
    <text evidence="1">Negative regulator of class I heat shock genes (grpE-dnaK-dnaJ and groELS operons). Prevents heat-shock induction of these operons.</text>
</comment>
<comment type="similarity">
    <text evidence="1">Belongs to the HrcA family.</text>
</comment>
<organism>
    <name type="scientific">Ureaplasma parvum serovar 3 (strain ATCC 27815 / 27 / NCTC 11736)</name>
    <dbReference type="NCBI Taxonomy" id="505682"/>
    <lineage>
        <taxon>Bacteria</taxon>
        <taxon>Bacillati</taxon>
        <taxon>Mycoplasmatota</taxon>
        <taxon>Mycoplasmoidales</taxon>
        <taxon>Mycoplasmoidaceae</taxon>
        <taxon>Ureaplasma</taxon>
    </lineage>
</organism>
<evidence type="ECO:0000255" key="1">
    <source>
        <dbReference type="HAMAP-Rule" id="MF_00081"/>
    </source>
</evidence>
<accession>B1AJ61</accession>
<dbReference type="EMBL" id="CP000942">
    <property type="protein sequence ID" value="ACA32810.1"/>
    <property type="molecule type" value="Genomic_DNA"/>
</dbReference>
<dbReference type="RefSeq" id="WP_006688647.1">
    <property type="nucleotide sequence ID" value="NC_010503.1"/>
</dbReference>
<dbReference type="SMR" id="B1AJ61"/>
<dbReference type="GeneID" id="29672623"/>
<dbReference type="KEGG" id="upa:UPA3_0439"/>
<dbReference type="HOGENOM" id="CLU_050019_1_0_14"/>
<dbReference type="Proteomes" id="UP000002162">
    <property type="component" value="Chromosome"/>
</dbReference>
<dbReference type="GO" id="GO:0003677">
    <property type="term" value="F:DNA binding"/>
    <property type="evidence" value="ECO:0007669"/>
    <property type="project" value="InterPro"/>
</dbReference>
<dbReference type="GO" id="GO:0045892">
    <property type="term" value="P:negative regulation of DNA-templated transcription"/>
    <property type="evidence" value="ECO:0007669"/>
    <property type="project" value="UniProtKB-UniRule"/>
</dbReference>
<dbReference type="Gene3D" id="3.30.450.40">
    <property type="match status" value="1"/>
</dbReference>
<dbReference type="Gene3D" id="3.30.390.60">
    <property type="entry name" value="Heat-inducible transcription repressor hrca homolog, domain 3"/>
    <property type="match status" value="1"/>
</dbReference>
<dbReference type="Gene3D" id="1.10.10.10">
    <property type="entry name" value="Winged helix-like DNA-binding domain superfamily/Winged helix DNA-binding domain"/>
    <property type="match status" value="1"/>
</dbReference>
<dbReference type="HAMAP" id="MF_00081">
    <property type="entry name" value="HrcA"/>
    <property type="match status" value="1"/>
</dbReference>
<dbReference type="InterPro" id="IPR029016">
    <property type="entry name" value="GAF-like_dom_sf"/>
</dbReference>
<dbReference type="InterPro" id="IPR002571">
    <property type="entry name" value="HrcA"/>
</dbReference>
<dbReference type="InterPro" id="IPR021153">
    <property type="entry name" value="HrcA_C"/>
</dbReference>
<dbReference type="InterPro" id="IPR036388">
    <property type="entry name" value="WH-like_DNA-bd_sf"/>
</dbReference>
<dbReference type="InterPro" id="IPR036390">
    <property type="entry name" value="WH_DNA-bd_sf"/>
</dbReference>
<dbReference type="InterPro" id="IPR005104">
    <property type="entry name" value="WHTH_HrcA_DNA-bd"/>
</dbReference>
<dbReference type="InterPro" id="IPR023120">
    <property type="entry name" value="WHTH_transcript_rep_HrcA_IDD"/>
</dbReference>
<dbReference type="NCBIfam" id="TIGR00331">
    <property type="entry name" value="hrcA"/>
    <property type="match status" value="1"/>
</dbReference>
<dbReference type="PANTHER" id="PTHR34824">
    <property type="entry name" value="HEAT-INDUCIBLE TRANSCRIPTION REPRESSOR HRCA"/>
    <property type="match status" value="1"/>
</dbReference>
<dbReference type="PANTHER" id="PTHR34824:SF1">
    <property type="entry name" value="HEAT-INDUCIBLE TRANSCRIPTION REPRESSOR HRCA"/>
    <property type="match status" value="1"/>
</dbReference>
<dbReference type="Pfam" id="PF01628">
    <property type="entry name" value="HrcA"/>
    <property type="match status" value="1"/>
</dbReference>
<dbReference type="Pfam" id="PF03444">
    <property type="entry name" value="HrcA_DNA-bdg"/>
    <property type="match status" value="1"/>
</dbReference>
<dbReference type="PIRSF" id="PIRSF005485">
    <property type="entry name" value="HrcA"/>
    <property type="match status" value="1"/>
</dbReference>
<dbReference type="SUPFAM" id="SSF55781">
    <property type="entry name" value="GAF domain-like"/>
    <property type="match status" value="1"/>
</dbReference>
<dbReference type="SUPFAM" id="SSF46785">
    <property type="entry name" value="Winged helix' DNA-binding domain"/>
    <property type="match status" value="1"/>
</dbReference>
<name>HRCA_UREP2</name>
<keyword id="KW-0678">Repressor</keyword>
<keyword id="KW-0346">Stress response</keyword>
<keyword id="KW-0804">Transcription</keyword>
<keyword id="KW-0805">Transcription regulation</keyword>
<gene>
    <name evidence="1" type="primary">hrcA</name>
    <name type="ordered locus">UPA3_0439</name>
</gene>
<reference key="1">
    <citation type="submission" date="2008-02" db="EMBL/GenBank/DDBJ databases">
        <title>Genome sequence of Ureaplasma parvum serovar 3.</title>
        <authorList>
            <person name="Methe B.A."/>
            <person name="Glass J."/>
            <person name="Waites K."/>
            <person name="Shrivastava S."/>
        </authorList>
    </citation>
    <scope>NUCLEOTIDE SEQUENCE [LARGE SCALE GENOMIC DNA]</scope>
    <source>
        <strain>ATCC 27815 / 27 / NCTC 11736</strain>
    </source>
</reference>
<protein>
    <recommendedName>
        <fullName evidence="1">Heat-inducible transcription repressor HrcA</fullName>
    </recommendedName>
</protein>
<feature type="chain" id="PRO_1000075298" description="Heat-inducible transcription repressor HrcA">
    <location>
        <begin position="1"/>
        <end position="357"/>
    </location>
</feature>
<proteinExistence type="inferred from homology"/>